<sequence>MFKSDIEIAQESKMKNIKNIAEKIGLTEEDIDLYGKYKCKISLDVLKRNKDKKDGKLILVTAINPTPAGEGKSTVTVGLGQALWKKNKKAVIALREPSLGPVFGIKGGAAGGGYSQVVPMEDINLHFTGDMHAITSANNLLAAAIDNHIHQGNILKIDQRRILFKRVMDMNDRALRNVIVALGGKINGFPREDGFMITVASEIMAILCLAEDLMDLKNKMGEILVAYSTEGKPIYCEDLEVQGAMALLMKDAIKPNLVQTLENTPAIIHGGPFANIAHGCNSILGTKMALKLGDYVITEAGFGADLGAEKFFDIKCRKANLKPNCVVIVATVRALKYNGGIPKENLKEQNMEALSKGIKNLGKHIENVNKFGVPAVVAINKFISDTEEEIEFIKKYCKELGAEVSIAEVWEKGGNGGLELADKVLDTIENKESKFNPIYEETLSIKQKIETIAEEIYGAEGVDYSKEAEKQISEIEKLDLDKKPVCMAKTQYSLSDDAKLLGRPCGFRINVKEVRISNGAGFIVVLTGNVMTMPGLPKKPAANNMNVLSDGNIVGLF</sequence>
<proteinExistence type="inferred from homology"/>
<comment type="catalytic activity">
    <reaction evidence="1">
        <text>(6S)-5,6,7,8-tetrahydrofolate + formate + ATP = (6R)-10-formyltetrahydrofolate + ADP + phosphate</text>
        <dbReference type="Rhea" id="RHEA:20221"/>
        <dbReference type="ChEBI" id="CHEBI:15740"/>
        <dbReference type="ChEBI" id="CHEBI:30616"/>
        <dbReference type="ChEBI" id="CHEBI:43474"/>
        <dbReference type="ChEBI" id="CHEBI:57453"/>
        <dbReference type="ChEBI" id="CHEBI:195366"/>
        <dbReference type="ChEBI" id="CHEBI:456216"/>
        <dbReference type="EC" id="6.3.4.3"/>
    </reaction>
</comment>
<comment type="pathway">
    <text evidence="1">One-carbon metabolism; tetrahydrofolate interconversion.</text>
</comment>
<comment type="similarity">
    <text evidence="1">Belongs to the formate--tetrahydrofolate ligase family.</text>
</comment>
<dbReference type="EC" id="6.3.4.3" evidence="1"/>
<dbReference type="EMBL" id="CP000727">
    <property type="protein sequence ID" value="ABS38805.1"/>
    <property type="molecule type" value="Genomic_DNA"/>
</dbReference>
<dbReference type="EMBL" id="AM412317">
    <property type="protein sequence ID" value="CAL85084.1"/>
    <property type="molecule type" value="Genomic_DNA"/>
</dbReference>
<dbReference type="RefSeq" id="WP_012048375.1">
    <property type="nucleotide sequence ID" value="NC_009698.1"/>
</dbReference>
<dbReference type="RefSeq" id="YP_001256005.1">
    <property type="nucleotide sequence ID" value="NC_009495.1"/>
</dbReference>
<dbReference type="RefSeq" id="YP_001389246.1">
    <property type="nucleotide sequence ID" value="NC_009698.1"/>
</dbReference>
<dbReference type="SMR" id="A5I7P9"/>
<dbReference type="GeneID" id="5187153"/>
<dbReference type="KEGG" id="cbh:CLC_3487"/>
<dbReference type="KEGG" id="cbo:CBO3523"/>
<dbReference type="PATRIC" id="fig|413999.7.peg.3501"/>
<dbReference type="HOGENOM" id="CLU_003601_3_3_9"/>
<dbReference type="UniPathway" id="UPA00193"/>
<dbReference type="PRO" id="PR:A5I7P9"/>
<dbReference type="Proteomes" id="UP000001986">
    <property type="component" value="Chromosome"/>
</dbReference>
<dbReference type="GO" id="GO:0005524">
    <property type="term" value="F:ATP binding"/>
    <property type="evidence" value="ECO:0007669"/>
    <property type="project" value="UniProtKB-UniRule"/>
</dbReference>
<dbReference type="GO" id="GO:0004329">
    <property type="term" value="F:formate-tetrahydrofolate ligase activity"/>
    <property type="evidence" value="ECO:0007669"/>
    <property type="project" value="UniProtKB-UniRule"/>
</dbReference>
<dbReference type="GO" id="GO:0035999">
    <property type="term" value="P:tetrahydrofolate interconversion"/>
    <property type="evidence" value="ECO:0007669"/>
    <property type="project" value="UniProtKB-UniRule"/>
</dbReference>
<dbReference type="CDD" id="cd00477">
    <property type="entry name" value="FTHFS"/>
    <property type="match status" value="1"/>
</dbReference>
<dbReference type="FunFam" id="3.30.1510.10:FF:000001">
    <property type="entry name" value="Formate--tetrahydrofolate ligase"/>
    <property type="match status" value="1"/>
</dbReference>
<dbReference type="FunFam" id="3.10.410.10:FF:000001">
    <property type="entry name" value="Putative formate--tetrahydrofolate ligase"/>
    <property type="match status" value="1"/>
</dbReference>
<dbReference type="Gene3D" id="3.30.1510.10">
    <property type="entry name" value="Domain 2, N(10)-formyltetrahydrofolate synthetase"/>
    <property type="match status" value="1"/>
</dbReference>
<dbReference type="Gene3D" id="3.10.410.10">
    <property type="entry name" value="Formyltetrahydrofolate synthetase, domain 3"/>
    <property type="match status" value="1"/>
</dbReference>
<dbReference type="Gene3D" id="3.40.50.300">
    <property type="entry name" value="P-loop containing nucleotide triphosphate hydrolases"/>
    <property type="match status" value="1"/>
</dbReference>
<dbReference type="HAMAP" id="MF_01543">
    <property type="entry name" value="FTHFS"/>
    <property type="match status" value="1"/>
</dbReference>
<dbReference type="InterPro" id="IPR000559">
    <property type="entry name" value="Formate_THF_ligase"/>
</dbReference>
<dbReference type="InterPro" id="IPR020628">
    <property type="entry name" value="Formate_THF_ligase_CS"/>
</dbReference>
<dbReference type="InterPro" id="IPR027417">
    <property type="entry name" value="P-loop_NTPase"/>
</dbReference>
<dbReference type="NCBIfam" id="NF010030">
    <property type="entry name" value="PRK13505.1"/>
    <property type="match status" value="1"/>
</dbReference>
<dbReference type="Pfam" id="PF01268">
    <property type="entry name" value="FTHFS"/>
    <property type="match status" value="1"/>
</dbReference>
<dbReference type="SUPFAM" id="SSF52540">
    <property type="entry name" value="P-loop containing nucleoside triphosphate hydrolases"/>
    <property type="match status" value="1"/>
</dbReference>
<dbReference type="PROSITE" id="PS00721">
    <property type="entry name" value="FTHFS_1"/>
    <property type="match status" value="1"/>
</dbReference>
<dbReference type="PROSITE" id="PS00722">
    <property type="entry name" value="FTHFS_2"/>
    <property type="match status" value="1"/>
</dbReference>
<keyword id="KW-0067">ATP-binding</keyword>
<keyword id="KW-0436">Ligase</keyword>
<keyword id="KW-0547">Nucleotide-binding</keyword>
<keyword id="KW-0554">One-carbon metabolism</keyword>
<keyword id="KW-1185">Reference proteome</keyword>
<gene>
    <name evidence="1" type="primary">fhs</name>
    <name type="ordered locus">CBO3523</name>
    <name type="ordered locus">CLC_3487</name>
</gene>
<reference key="1">
    <citation type="journal article" date="2007" name="Genome Res.">
        <title>Genome sequence of a proteolytic (Group I) Clostridium botulinum strain Hall A and comparative analysis of the clostridial genomes.</title>
        <authorList>
            <person name="Sebaihia M."/>
            <person name="Peck M.W."/>
            <person name="Minton N.P."/>
            <person name="Thomson N.R."/>
            <person name="Holden M.T.G."/>
            <person name="Mitchell W.J."/>
            <person name="Carter A.T."/>
            <person name="Bentley S.D."/>
            <person name="Mason D.R."/>
            <person name="Crossman L."/>
            <person name="Paul C.J."/>
            <person name="Ivens A."/>
            <person name="Wells-Bennik M.H.J."/>
            <person name="Davis I.J."/>
            <person name="Cerdeno-Tarraga A.M."/>
            <person name="Churcher C."/>
            <person name="Quail M.A."/>
            <person name="Chillingworth T."/>
            <person name="Feltwell T."/>
            <person name="Fraser A."/>
            <person name="Goodhead I."/>
            <person name="Hance Z."/>
            <person name="Jagels K."/>
            <person name="Larke N."/>
            <person name="Maddison M."/>
            <person name="Moule S."/>
            <person name="Mungall K."/>
            <person name="Norbertczak H."/>
            <person name="Rabbinowitsch E."/>
            <person name="Sanders M."/>
            <person name="Simmonds M."/>
            <person name="White B."/>
            <person name="Whithead S."/>
            <person name="Parkhill J."/>
        </authorList>
    </citation>
    <scope>NUCLEOTIDE SEQUENCE [LARGE SCALE GENOMIC DNA]</scope>
    <source>
        <strain>Hall / ATCC 3502 / NCTC 13319 / Type A</strain>
    </source>
</reference>
<reference key="2">
    <citation type="journal article" date="2007" name="PLoS ONE">
        <title>Analysis of the neurotoxin complex genes in Clostridium botulinum A1-A4 and B1 strains: BoNT/A3, /Ba4 and /B1 clusters are located within plasmids.</title>
        <authorList>
            <person name="Smith T.J."/>
            <person name="Hill K.K."/>
            <person name="Foley B.T."/>
            <person name="Detter J.C."/>
            <person name="Munk A.C."/>
            <person name="Bruce D.C."/>
            <person name="Doggett N.A."/>
            <person name="Smith L.A."/>
            <person name="Marks J.D."/>
            <person name="Xie G."/>
            <person name="Brettin T.S."/>
        </authorList>
    </citation>
    <scope>NUCLEOTIDE SEQUENCE [LARGE SCALE GENOMIC DNA]</scope>
    <source>
        <strain>Hall / ATCC 3502 / NCTC 13319 / Type A</strain>
    </source>
</reference>
<name>FTHS_CLOBH</name>
<organism>
    <name type="scientific">Clostridium botulinum (strain Hall / ATCC 3502 / NCTC 13319 / Type A)</name>
    <dbReference type="NCBI Taxonomy" id="441771"/>
    <lineage>
        <taxon>Bacteria</taxon>
        <taxon>Bacillati</taxon>
        <taxon>Bacillota</taxon>
        <taxon>Clostridia</taxon>
        <taxon>Eubacteriales</taxon>
        <taxon>Clostridiaceae</taxon>
        <taxon>Clostridium</taxon>
    </lineage>
</organism>
<feature type="chain" id="PRO_0000318567" description="Formate--tetrahydrofolate ligase">
    <location>
        <begin position="1"/>
        <end position="557"/>
    </location>
</feature>
<feature type="binding site" evidence="1">
    <location>
        <begin position="66"/>
        <end position="73"/>
    </location>
    <ligand>
        <name>ATP</name>
        <dbReference type="ChEBI" id="CHEBI:30616"/>
    </ligand>
</feature>
<evidence type="ECO:0000255" key="1">
    <source>
        <dbReference type="HAMAP-Rule" id="MF_01543"/>
    </source>
</evidence>
<accession>A5I7P9</accession>
<accession>A7G8Y1</accession>
<protein>
    <recommendedName>
        <fullName evidence="1">Formate--tetrahydrofolate ligase</fullName>
        <ecNumber evidence="1">6.3.4.3</ecNumber>
    </recommendedName>
    <alternativeName>
        <fullName evidence="1">Formyltetrahydrofolate synthetase</fullName>
        <shortName evidence="1">FHS</shortName>
        <shortName evidence="1">FTHFS</shortName>
    </alternativeName>
</protein>